<accession>Q68WT6</accession>
<comment type="function">
    <text evidence="1">Catalyzes the reduction of the glycolytic intermediate dihydroxyacetone phosphate (DHAP) to sn-glycerol 3-phosphate (G3P), the key precursor for phospholipid synthesis.</text>
</comment>
<comment type="catalytic activity">
    <reaction evidence="1">
        <text>sn-glycerol 3-phosphate + NAD(+) = dihydroxyacetone phosphate + NADH + H(+)</text>
        <dbReference type="Rhea" id="RHEA:11092"/>
        <dbReference type="ChEBI" id="CHEBI:15378"/>
        <dbReference type="ChEBI" id="CHEBI:57540"/>
        <dbReference type="ChEBI" id="CHEBI:57597"/>
        <dbReference type="ChEBI" id="CHEBI:57642"/>
        <dbReference type="ChEBI" id="CHEBI:57945"/>
        <dbReference type="EC" id="1.1.1.94"/>
    </reaction>
    <physiologicalReaction direction="right-to-left" evidence="1">
        <dbReference type="Rhea" id="RHEA:11094"/>
    </physiologicalReaction>
</comment>
<comment type="catalytic activity">
    <reaction evidence="1">
        <text>sn-glycerol 3-phosphate + NADP(+) = dihydroxyacetone phosphate + NADPH + H(+)</text>
        <dbReference type="Rhea" id="RHEA:11096"/>
        <dbReference type="ChEBI" id="CHEBI:15378"/>
        <dbReference type="ChEBI" id="CHEBI:57597"/>
        <dbReference type="ChEBI" id="CHEBI:57642"/>
        <dbReference type="ChEBI" id="CHEBI:57783"/>
        <dbReference type="ChEBI" id="CHEBI:58349"/>
        <dbReference type="EC" id="1.1.1.94"/>
    </reaction>
    <physiologicalReaction direction="right-to-left" evidence="1">
        <dbReference type="Rhea" id="RHEA:11098"/>
    </physiologicalReaction>
</comment>
<comment type="pathway">
    <text evidence="1">Membrane lipid metabolism; glycerophospholipid metabolism.</text>
</comment>
<comment type="subcellular location">
    <subcellularLocation>
        <location evidence="1">Cytoplasm</location>
    </subcellularLocation>
</comment>
<comment type="similarity">
    <text evidence="1">Belongs to the NAD-dependent glycerol-3-phosphate dehydrogenase family.</text>
</comment>
<gene>
    <name evidence="1" type="primary">gpsA</name>
    <name type="ordered locus">RT0429</name>
</gene>
<protein>
    <recommendedName>
        <fullName evidence="1">Glycerol-3-phosphate dehydrogenase [NAD(P)+]</fullName>
        <ecNumber evidence="1">1.1.1.94</ecNumber>
    </recommendedName>
    <alternativeName>
        <fullName evidence="1">NAD(P)(+)-dependent glycerol-3-phosphate dehydrogenase</fullName>
    </alternativeName>
    <alternativeName>
        <fullName evidence="1">NAD(P)H-dependent dihydroxyacetone-phosphate reductase</fullName>
    </alternativeName>
</protein>
<evidence type="ECO:0000255" key="1">
    <source>
        <dbReference type="HAMAP-Rule" id="MF_00394"/>
    </source>
</evidence>
<sequence length="320" mass="34971">MNKFKNIAVYGGGSFGTSLASVVARNCNNVTLFLRNETILKEILYKKTNVQYLGDIKLPTNLQATTNLSVIKDFDLIIIAVPSYAFVDAIKLLKTYGISKDNTLLVATKGFAHNPTELLSDRLNTLLPDNPIGFLSGPNLAKELAKNLHTSASIASLDIDIANKIAHNLSSKTFTTNTTIDIVTLQVAGALKNIFAIKSGIDLAREQGANSRAMLIVAALKEITTLSKVLGGMQKNSDILLEAGVVGDLVLTCYSLGSRNTKFGYEFEISMDKKKFLREYKELVEGREALKLVLDLIKKYNLHMPIVSEVASLIHCGIYI</sequence>
<feature type="chain" id="PRO_0000278081" description="Glycerol-3-phosphate dehydrogenase [NAD(P)+]">
    <location>
        <begin position="1"/>
        <end position="320"/>
    </location>
</feature>
<feature type="active site" description="Proton acceptor" evidence="1">
    <location>
        <position position="192"/>
    </location>
</feature>
<feature type="binding site" evidence="1">
    <location>
        <position position="14"/>
    </location>
    <ligand>
        <name>NADPH</name>
        <dbReference type="ChEBI" id="CHEBI:57783"/>
    </ligand>
</feature>
<feature type="binding site" evidence="1">
    <location>
        <position position="15"/>
    </location>
    <ligand>
        <name>NADPH</name>
        <dbReference type="ChEBI" id="CHEBI:57783"/>
    </ligand>
</feature>
<feature type="binding site" evidence="1">
    <location>
        <position position="35"/>
    </location>
    <ligand>
        <name>NADPH</name>
        <dbReference type="ChEBI" id="CHEBI:57783"/>
    </ligand>
</feature>
<feature type="binding site" evidence="1">
    <location>
        <position position="109"/>
    </location>
    <ligand>
        <name>NADPH</name>
        <dbReference type="ChEBI" id="CHEBI:57783"/>
    </ligand>
</feature>
<feature type="binding site" evidence="1">
    <location>
        <position position="109"/>
    </location>
    <ligand>
        <name>sn-glycerol 3-phosphate</name>
        <dbReference type="ChEBI" id="CHEBI:57597"/>
    </ligand>
</feature>
<feature type="binding site" evidence="1">
    <location>
        <position position="137"/>
    </location>
    <ligand>
        <name>sn-glycerol 3-phosphate</name>
        <dbReference type="ChEBI" id="CHEBI:57597"/>
    </ligand>
</feature>
<feature type="binding site" evidence="1">
    <location>
        <position position="141"/>
    </location>
    <ligand>
        <name>NADPH</name>
        <dbReference type="ChEBI" id="CHEBI:57783"/>
    </ligand>
</feature>
<feature type="binding site" evidence="1">
    <location>
        <position position="192"/>
    </location>
    <ligand>
        <name>sn-glycerol 3-phosphate</name>
        <dbReference type="ChEBI" id="CHEBI:57597"/>
    </ligand>
</feature>
<feature type="binding site" evidence="1">
    <location>
        <position position="248"/>
    </location>
    <ligand>
        <name>sn-glycerol 3-phosphate</name>
        <dbReference type="ChEBI" id="CHEBI:57597"/>
    </ligand>
</feature>
<feature type="binding site" evidence="1">
    <location>
        <position position="258"/>
    </location>
    <ligand>
        <name>sn-glycerol 3-phosphate</name>
        <dbReference type="ChEBI" id="CHEBI:57597"/>
    </ligand>
</feature>
<feature type="binding site" evidence="1">
    <location>
        <position position="259"/>
    </location>
    <ligand>
        <name>NADPH</name>
        <dbReference type="ChEBI" id="CHEBI:57783"/>
    </ligand>
</feature>
<feature type="binding site" evidence="1">
    <location>
        <position position="259"/>
    </location>
    <ligand>
        <name>sn-glycerol 3-phosphate</name>
        <dbReference type="ChEBI" id="CHEBI:57597"/>
    </ligand>
</feature>
<feature type="binding site" evidence="1">
    <location>
        <position position="260"/>
    </location>
    <ligand>
        <name>sn-glycerol 3-phosphate</name>
        <dbReference type="ChEBI" id="CHEBI:57597"/>
    </ligand>
</feature>
<feature type="binding site" evidence="1">
    <location>
        <position position="283"/>
    </location>
    <ligand>
        <name>NADPH</name>
        <dbReference type="ChEBI" id="CHEBI:57783"/>
    </ligand>
</feature>
<feature type="binding site" evidence="1">
    <location>
        <position position="285"/>
    </location>
    <ligand>
        <name>NADPH</name>
        <dbReference type="ChEBI" id="CHEBI:57783"/>
    </ligand>
</feature>
<dbReference type="EC" id="1.1.1.94" evidence="1"/>
<dbReference type="EMBL" id="AE017197">
    <property type="protein sequence ID" value="AAU03906.1"/>
    <property type="molecule type" value="Genomic_DNA"/>
</dbReference>
<dbReference type="RefSeq" id="WP_011190890.1">
    <property type="nucleotide sequence ID" value="NC_006142.1"/>
</dbReference>
<dbReference type="SMR" id="Q68WT6"/>
<dbReference type="KEGG" id="rty:RT0429"/>
<dbReference type="eggNOG" id="COG0240">
    <property type="taxonomic scope" value="Bacteria"/>
</dbReference>
<dbReference type="HOGENOM" id="CLU_033449_0_0_5"/>
<dbReference type="OrthoDB" id="9812273at2"/>
<dbReference type="UniPathway" id="UPA00940"/>
<dbReference type="Proteomes" id="UP000000604">
    <property type="component" value="Chromosome"/>
</dbReference>
<dbReference type="GO" id="GO:0005829">
    <property type="term" value="C:cytosol"/>
    <property type="evidence" value="ECO:0007669"/>
    <property type="project" value="TreeGrafter"/>
</dbReference>
<dbReference type="GO" id="GO:0047952">
    <property type="term" value="F:glycerol-3-phosphate dehydrogenase [NAD(P)+] activity"/>
    <property type="evidence" value="ECO:0007669"/>
    <property type="project" value="UniProtKB-UniRule"/>
</dbReference>
<dbReference type="GO" id="GO:0051287">
    <property type="term" value="F:NAD binding"/>
    <property type="evidence" value="ECO:0007669"/>
    <property type="project" value="InterPro"/>
</dbReference>
<dbReference type="GO" id="GO:0005975">
    <property type="term" value="P:carbohydrate metabolic process"/>
    <property type="evidence" value="ECO:0007669"/>
    <property type="project" value="InterPro"/>
</dbReference>
<dbReference type="GO" id="GO:0046167">
    <property type="term" value="P:glycerol-3-phosphate biosynthetic process"/>
    <property type="evidence" value="ECO:0007669"/>
    <property type="project" value="UniProtKB-UniRule"/>
</dbReference>
<dbReference type="GO" id="GO:0046168">
    <property type="term" value="P:glycerol-3-phosphate catabolic process"/>
    <property type="evidence" value="ECO:0007669"/>
    <property type="project" value="InterPro"/>
</dbReference>
<dbReference type="GO" id="GO:0006650">
    <property type="term" value="P:glycerophospholipid metabolic process"/>
    <property type="evidence" value="ECO:0007669"/>
    <property type="project" value="UniProtKB-UniRule"/>
</dbReference>
<dbReference type="GO" id="GO:0008654">
    <property type="term" value="P:phospholipid biosynthetic process"/>
    <property type="evidence" value="ECO:0007669"/>
    <property type="project" value="UniProtKB-KW"/>
</dbReference>
<dbReference type="Gene3D" id="1.10.1040.10">
    <property type="entry name" value="N-(1-d-carboxylethyl)-l-norvaline Dehydrogenase, domain 2"/>
    <property type="match status" value="1"/>
</dbReference>
<dbReference type="Gene3D" id="3.40.50.720">
    <property type="entry name" value="NAD(P)-binding Rossmann-like Domain"/>
    <property type="match status" value="1"/>
</dbReference>
<dbReference type="HAMAP" id="MF_00394">
    <property type="entry name" value="NAD_Glyc3P_dehydrog"/>
    <property type="match status" value="1"/>
</dbReference>
<dbReference type="InterPro" id="IPR008927">
    <property type="entry name" value="6-PGluconate_DH-like_C_sf"/>
</dbReference>
<dbReference type="InterPro" id="IPR013328">
    <property type="entry name" value="6PGD_dom2"/>
</dbReference>
<dbReference type="InterPro" id="IPR006168">
    <property type="entry name" value="G3P_DH_NAD-dep"/>
</dbReference>
<dbReference type="InterPro" id="IPR006109">
    <property type="entry name" value="G3P_DH_NAD-dep_C"/>
</dbReference>
<dbReference type="InterPro" id="IPR011128">
    <property type="entry name" value="G3P_DH_NAD-dep_N"/>
</dbReference>
<dbReference type="InterPro" id="IPR036291">
    <property type="entry name" value="NAD(P)-bd_dom_sf"/>
</dbReference>
<dbReference type="NCBIfam" id="NF000947">
    <property type="entry name" value="PRK00094.2-5"/>
    <property type="match status" value="1"/>
</dbReference>
<dbReference type="PANTHER" id="PTHR11728">
    <property type="entry name" value="GLYCEROL-3-PHOSPHATE DEHYDROGENASE"/>
    <property type="match status" value="1"/>
</dbReference>
<dbReference type="PANTHER" id="PTHR11728:SF1">
    <property type="entry name" value="GLYCEROL-3-PHOSPHATE DEHYDROGENASE [NAD(+)] 2, CHLOROPLASTIC"/>
    <property type="match status" value="1"/>
</dbReference>
<dbReference type="Pfam" id="PF07479">
    <property type="entry name" value="NAD_Gly3P_dh_C"/>
    <property type="match status" value="1"/>
</dbReference>
<dbReference type="Pfam" id="PF01210">
    <property type="entry name" value="NAD_Gly3P_dh_N"/>
    <property type="match status" value="1"/>
</dbReference>
<dbReference type="PIRSF" id="PIRSF000114">
    <property type="entry name" value="Glycerol-3-P_dh"/>
    <property type="match status" value="1"/>
</dbReference>
<dbReference type="PRINTS" id="PR00077">
    <property type="entry name" value="GPDHDRGNASE"/>
</dbReference>
<dbReference type="SUPFAM" id="SSF48179">
    <property type="entry name" value="6-phosphogluconate dehydrogenase C-terminal domain-like"/>
    <property type="match status" value="1"/>
</dbReference>
<dbReference type="SUPFAM" id="SSF51735">
    <property type="entry name" value="NAD(P)-binding Rossmann-fold domains"/>
    <property type="match status" value="1"/>
</dbReference>
<dbReference type="PROSITE" id="PS00957">
    <property type="entry name" value="NAD_G3PDH"/>
    <property type="match status" value="1"/>
</dbReference>
<organism>
    <name type="scientific">Rickettsia typhi (strain ATCC VR-144 / Wilmington)</name>
    <dbReference type="NCBI Taxonomy" id="257363"/>
    <lineage>
        <taxon>Bacteria</taxon>
        <taxon>Pseudomonadati</taxon>
        <taxon>Pseudomonadota</taxon>
        <taxon>Alphaproteobacteria</taxon>
        <taxon>Rickettsiales</taxon>
        <taxon>Rickettsiaceae</taxon>
        <taxon>Rickettsieae</taxon>
        <taxon>Rickettsia</taxon>
        <taxon>typhus group</taxon>
    </lineage>
</organism>
<proteinExistence type="inferred from homology"/>
<name>GPDA_RICTY</name>
<reference key="1">
    <citation type="journal article" date="2004" name="J. Bacteriol.">
        <title>Complete genome sequence of Rickettsia typhi and comparison with sequences of other Rickettsiae.</title>
        <authorList>
            <person name="McLeod M.P."/>
            <person name="Qin X."/>
            <person name="Karpathy S.E."/>
            <person name="Gioia J."/>
            <person name="Highlander S.K."/>
            <person name="Fox G.E."/>
            <person name="McNeill T.Z."/>
            <person name="Jiang H."/>
            <person name="Muzny D."/>
            <person name="Jacob L.S."/>
            <person name="Hawes A.C."/>
            <person name="Sodergren E."/>
            <person name="Gill R."/>
            <person name="Hume J."/>
            <person name="Morgan M."/>
            <person name="Fan G."/>
            <person name="Amin A.G."/>
            <person name="Gibbs R.A."/>
            <person name="Hong C."/>
            <person name="Yu X.-J."/>
            <person name="Walker D.H."/>
            <person name="Weinstock G.M."/>
        </authorList>
    </citation>
    <scope>NUCLEOTIDE SEQUENCE [LARGE SCALE GENOMIC DNA]</scope>
    <source>
        <strain>ATCC VR-144 / Wilmington</strain>
    </source>
</reference>
<keyword id="KW-0963">Cytoplasm</keyword>
<keyword id="KW-0444">Lipid biosynthesis</keyword>
<keyword id="KW-0443">Lipid metabolism</keyword>
<keyword id="KW-0520">NAD</keyword>
<keyword id="KW-0521">NADP</keyword>
<keyword id="KW-0547">Nucleotide-binding</keyword>
<keyword id="KW-0560">Oxidoreductase</keyword>
<keyword id="KW-0594">Phospholipid biosynthesis</keyword>
<keyword id="KW-1208">Phospholipid metabolism</keyword>